<gene>
    <name evidence="1" type="primary">proA</name>
    <name type="ordered locus">EcHS_A0270</name>
</gene>
<sequence length="417" mass="44630">MLEQMGIAAKQASYKLAQLSSREKNRVLEKIADELEAQSEIILNANAQDVADARANGLGEAMLDRLALTPARLKGIADDVRQVCNLADPVGQVIDGSVLDSGLRLERRRVPLGVIGVIYEARPNVTVDVASLCLKTGNAVILRGGKETCRTNAATVAVIQDALKSCGLPAGAVQAIDNPDRALVSEMLRMDKYIDMLIPRGGAGLHKLCREQSTIPVITGGIGVCHIYVDESVEIAEALKVIVNAKTQRPSTCNTVETLLVNKNIADSFLPALSKQMAESGVTLHADAAALAQLQAGPAKVVAVKAEEYDDEFLSLDLNVKIVSDLDDAIAHIREHGTQHSDAILTRDMRNAQRFVNEVDSSAVYVNASTRFTDGGQFGLGAEVAVSTQKLHARGPMGLEALTTYKWIGIGDYTIRA</sequence>
<comment type="function">
    <text evidence="1">Catalyzes the NADPH-dependent reduction of L-glutamate 5-phosphate into L-glutamate 5-semialdehyde and phosphate. The product spontaneously undergoes cyclization to form 1-pyrroline-5-carboxylate.</text>
</comment>
<comment type="catalytic activity">
    <reaction evidence="1">
        <text>L-glutamate 5-semialdehyde + phosphate + NADP(+) = L-glutamyl 5-phosphate + NADPH + H(+)</text>
        <dbReference type="Rhea" id="RHEA:19541"/>
        <dbReference type="ChEBI" id="CHEBI:15378"/>
        <dbReference type="ChEBI" id="CHEBI:43474"/>
        <dbReference type="ChEBI" id="CHEBI:57783"/>
        <dbReference type="ChEBI" id="CHEBI:58066"/>
        <dbReference type="ChEBI" id="CHEBI:58274"/>
        <dbReference type="ChEBI" id="CHEBI:58349"/>
        <dbReference type="EC" id="1.2.1.41"/>
    </reaction>
</comment>
<comment type="pathway">
    <text evidence="1">Amino-acid biosynthesis; L-proline biosynthesis; L-glutamate 5-semialdehyde from L-glutamate: step 2/2.</text>
</comment>
<comment type="subcellular location">
    <subcellularLocation>
        <location evidence="1">Cytoplasm</location>
    </subcellularLocation>
</comment>
<comment type="similarity">
    <text evidence="1">Belongs to the gamma-glutamyl phosphate reductase family.</text>
</comment>
<evidence type="ECO:0000255" key="1">
    <source>
        <dbReference type="HAMAP-Rule" id="MF_00412"/>
    </source>
</evidence>
<keyword id="KW-0028">Amino-acid biosynthesis</keyword>
<keyword id="KW-0963">Cytoplasm</keyword>
<keyword id="KW-0521">NADP</keyword>
<keyword id="KW-0560">Oxidoreductase</keyword>
<keyword id="KW-0641">Proline biosynthesis</keyword>
<feature type="chain" id="PRO_1000060840" description="Gamma-glutamyl phosphate reductase">
    <location>
        <begin position="1"/>
        <end position="417"/>
    </location>
</feature>
<dbReference type="EC" id="1.2.1.41" evidence="1"/>
<dbReference type="EMBL" id="CP000802">
    <property type="protein sequence ID" value="ABV04660.1"/>
    <property type="molecule type" value="Genomic_DNA"/>
</dbReference>
<dbReference type="RefSeq" id="WP_000893255.1">
    <property type="nucleotide sequence ID" value="NC_009800.1"/>
</dbReference>
<dbReference type="SMR" id="A7ZWK6"/>
<dbReference type="GeneID" id="75205724"/>
<dbReference type="KEGG" id="ecx:EcHS_A0270"/>
<dbReference type="HOGENOM" id="CLU_030231_0_0_6"/>
<dbReference type="UniPathway" id="UPA00098">
    <property type="reaction ID" value="UER00360"/>
</dbReference>
<dbReference type="GO" id="GO:0005737">
    <property type="term" value="C:cytoplasm"/>
    <property type="evidence" value="ECO:0007669"/>
    <property type="project" value="UniProtKB-SubCell"/>
</dbReference>
<dbReference type="GO" id="GO:0004350">
    <property type="term" value="F:glutamate-5-semialdehyde dehydrogenase activity"/>
    <property type="evidence" value="ECO:0007669"/>
    <property type="project" value="UniProtKB-UniRule"/>
</dbReference>
<dbReference type="GO" id="GO:0050661">
    <property type="term" value="F:NADP binding"/>
    <property type="evidence" value="ECO:0007669"/>
    <property type="project" value="InterPro"/>
</dbReference>
<dbReference type="GO" id="GO:0055129">
    <property type="term" value="P:L-proline biosynthetic process"/>
    <property type="evidence" value="ECO:0007669"/>
    <property type="project" value="UniProtKB-UniRule"/>
</dbReference>
<dbReference type="CDD" id="cd07079">
    <property type="entry name" value="ALDH_F18-19_ProA-GPR"/>
    <property type="match status" value="1"/>
</dbReference>
<dbReference type="FunFam" id="3.40.309.10:FF:000006">
    <property type="entry name" value="Gamma-glutamyl phosphate reductase"/>
    <property type="match status" value="1"/>
</dbReference>
<dbReference type="Gene3D" id="3.40.605.10">
    <property type="entry name" value="Aldehyde Dehydrogenase, Chain A, domain 1"/>
    <property type="match status" value="1"/>
</dbReference>
<dbReference type="Gene3D" id="3.40.309.10">
    <property type="entry name" value="Aldehyde Dehydrogenase, Chain A, domain 2"/>
    <property type="match status" value="1"/>
</dbReference>
<dbReference type="HAMAP" id="MF_00412">
    <property type="entry name" value="ProA"/>
    <property type="match status" value="1"/>
</dbReference>
<dbReference type="InterPro" id="IPR016161">
    <property type="entry name" value="Ald_DH/histidinol_DH"/>
</dbReference>
<dbReference type="InterPro" id="IPR016163">
    <property type="entry name" value="Ald_DH_C"/>
</dbReference>
<dbReference type="InterPro" id="IPR016162">
    <property type="entry name" value="Ald_DH_N"/>
</dbReference>
<dbReference type="InterPro" id="IPR015590">
    <property type="entry name" value="Aldehyde_DH_dom"/>
</dbReference>
<dbReference type="InterPro" id="IPR020593">
    <property type="entry name" value="G-glutamylP_reductase_CS"/>
</dbReference>
<dbReference type="InterPro" id="IPR012134">
    <property type="entry name" value="Glu-5-SA_DH"/>
</dbReference>
<dbReference type="InterPro" id="IPR000965">
    <property type="entry name" value="GPR_dom"/>
</dbReference>
<dbReference type="NCBIfam" id="NF001221">
    <property type="entry name" value="PRK00197.1"/>
    <property type="match status" value="1"/>
</dbReference>
<dbReference type="NCBIfam" id="TIGR00407">
    <property type="entry name" value="proA"/>
    <property type="match status" value="1"/>
</dbReference>
<dbReference type="PANTHER" id="PTHR11063:SF8">
    <property type="entry name" value="DELTA-1-PYRROLINE-5-CARBOXYLATE SYNTHASE"/>
    <property type="match status" value="1"/>
</dbReference>
<dbReference type="PANTHER" id="PTHR11063">
    <property type="entry name" value="GLUTAMATE SEMIALDEHYDE DEHYDROGENASE"/>
    <property type="match status" value="1"/>
</dbReference>
<dbReference type="Pfam" id="PF00171">
    <property type="entry name" value="Aldedh"/>
    <property type="match status" value="1"/>
</dbReference>
<dbReference type="PIRSF" id="PIRSF000151">
    <property type="entry name" value="GPR"/>
    <property type="match status" value="1"/>
</dbReference>
<dbReference type="SUPFAM" id="SSF53720">
    <property type="entry name" value="ALDH-like"/>
    <property type="match status" value="1"/>
</dbReference>
<dbReference type="PROSITE" id="PS01223">
    <property type="entry name" value="PROA"/>
    <property type="match status" value="1"/>
</dbReference>
<proteinExistence type="inferred from homology"/>
<name>PROA_ECOHS</name>
<organism>
    <name type="scientific">Escherichia coli O9:H4 (strain HS)</name>
    <dbReference type="NCBI Taxonomy" id="331112"/>
    <lineage>
        <taxon>Bacteria</taxon>
        <taxon>Pseudomonadati</taxon>
        <taxon>Pseudomonadota</taxon>
        <taxon>Gammaproteobacteria</taxon>
        <taxon>Enterobacterales</taxon>
        <taxon>Enterobacteriaceae</taxon>
        <taxon>Escherichia</taxon>
    </lineage>
</organism>
<protein>
    <recommendedName>
        <fullName evidence="1">Gamma-glutamyl phosphate reductase</fullName>
        <shortName evidence="1">GPR</shortName>
        <ecNumber evidence="1">1.2.1.41</ecNumber>
    </recommendedName>
    <alternativeName>
        <fullName evidence="1">Glutamate-5-semialdehyde dehydrogenase</fullName>
    </alternativeName>
    <alternativeName>
        <fullName evidence="1">Glutamyl-gamma-semialdehyde dehydrogenase</fullName>
        <shortName evidence="1">GSA dehydrogenase</shortName>
    </alternativeName>
</protein>
<accession>A7ZWK6</accession>
<reference key="1">
    <citation type="journal article" date="2008" name="J. Bacteriol.">
        <title>The pangenome structure of Escherichia coli: comparative genomic analysis of E. coli commensal and pathogenic isolates.</title>
        <authorList>
            <person name="Rasko D.A."/>
            <person name="Rosovitz M.J."/>
            <person name="Myers G.S.A."/>
            <person name="Mongodin E.F."/>
            <person name="Fricke W.F."/>
            <person name="Gajer P."/>
            <person name="Crabtree J."/>
            <person name="Sebaihia M."/>
            <person name="Thomson N.R."/>
            <person name="Chaudhuri R."/>
            <person name="Henderson I.R."/>
            <person name="Sperandio V."/>
            <person name="Ravel J."/>
        </authorList>
    </citation>
    <scope>NUCLEOTIDE SEQUENCE [LARGE SCALE GENOMIC DNA]</scope>
    <source>
        <strain>HS</strain>
    </source>
</reference>